<protein>
    <recommendedName>
        <fullName>Histone H2A</fullName>
    </recommendedName>
</protein>
<reference key="1">
    <citation type="submission" date="2004-12" db="EMBL/GenBank/DDBJ databases">
        <authorList>
            <person name="Chen B.S."/>
            <person name="Li Y.Z."/>
            <person name="Peng Y.L."/>
            <person name="Dong H.T."/>
            <person name="Li D.B."/>
        </authorList>
    </citation>
    <scope>NUCLEOTIDE SEQUENCE [MRNA]</scope>
    <source>
        <strain>Y34</strain>
    </source>
</reference>
<reference key="2">
    <citation type="journal article" date="2012" name="PLoS Genet.">
        <title>Comparative analysis of the genomes of two field isolates of the rice blast fungus Magnaporthe oryzae.</title>
        <authorList>
            <person name="Xue M."/>
            <person name="Yang J."/>
            <person name="Li Z."/>
            <person name="Hu S."/>
            <person name="Yao N."/>
            <person name="Dean R.A."/>
            <person name="Zhao W."/>
            <person name="Shen M."/>
            <person name="Zhang H."/>
            <person name="Li C."/>
            <person name="Liu L."/>
            <person name="Cao L."/>
            <person name="Xu X."/>
            <person name="Xing Y."/>
            <person name="Hsiang T."/>
            <person name="Zhang Z."/>
            <person name="Xu J.-R."/>
            <person name="Peng Y.-L."/>
        </authorList>
    </citation>
    <scope>NUCLEOTIDE SEQUENCE [LARGE SCALE GENOMIC DNA]</scope>
    <source>
        <strain>Y34</strain>
    </source>
</reference>
<proteinExistence type="evidence at transcript level"/>
<keyword id="KW-0007">Acetylation</keyword>
<keyword id="KW-0158">Chromosome</keyword>
<keyword id="KW-0227">DNA damage</keyword>
<keyword id="KW-0234">DNA repair</keyword>
<keyword id="KW-0238">DNA-binding</keyword>
<keyword id="KW-0488">Methylation</keyword>
<keyword id="KW-0544">Nucleosome core</keyword>
<keyword id="KW-0539">Nucleus</keyword>
<keyword id="KW-0597">Phosphoprotein</keyword>
<evidence type="ECO:0000250" key="1"/>
<evidence type="ECO:0000256" key="2">
    <source>
        <dbReference type="SAM" id="MobiDB-lite"/>
    </source>
</evidence>
<evidence type="ECO:0000305" key="3"/>
<organism>
    <name type="scientific">Pyricularia oryzae (strain Y34)</name>
    <name type="common">Rice blast fungus</name>
    <name type="synonym">Magnaporthe oryzae</name>
    <dbReference type="NCBI Taxonomy" id="1143189"/>
    <lineage>
        <taxon>Eukaryota</taxon>
        <taxon>Fungi</taxon>
        <taxon>Dikarya</taxon>
        <taxon>Ascomycota</taxon>
        <taxon>Pezizomycotina</taxon>
        <taxon>Sordariomycetes</taxon>
        <taxon>Sordariomycetidae</taxon>
        <taxon>Magnaporthales</taxon>
        <taxon>Pyriculariaceae</taxon>
        <taxon>Pyricularia</taxon>
    </lineage>
</organism>
<feature type="initiator methionine" description="Removed" evidence="1">
    <location>
        <position position="1"/>
    </location>
</feature>
<feature type="chain" id="PRO_0000423545" description="Histone H2A">
    <location>
        <begin position="2"/>
        <end position="136"/>
    </location>
</feature>
<feature type="region of interest" description="Disordered" evidence="2">
    <location>
        <begin position="1"/>
        <end position="24"/>
    </location>
</feature>
<feature type="short sequence motif" description="[ST]-Q motif">
    <location>
        <begin position="133"/>
        <end position="134"/>
    </location>
</feature>
<feature type="compositionally biased region" description="Gly residues" evidence="2">
    <location>
        <begin position="1"/>
        <end position="11"/>
    </location>
</feature>
<feature type="site" description="Not ubiquitinated" evidence="3">
    <location>
        <position position="121"/>
    </location>
</feature>
<feature type="modified residue" description="N6-acetyllysine" evidence="1">
    <location>
        <position position="6"/>
    </location>
</feature>
<feature type="modified residue" description="N6-acetyllysine" evidence="1">
    <location>
        <position position="10"/>
    </location>
</feature>
<feature type="modified residue" description="N5-methylglutamine" evidence="1">
    <location>
        <position position="107"/>
    </location>
</feature>
<feature type="modified residue" description="Phosphoserine" evidence="1">
    <location>
        <position position="133"/>
    </location>
</feature>
<name>H2A_PYRO3</name>
<gene>
    <name type="primary">HTA1</name>
    <name type="ORF">OOU_Y34scaffold00655g32</name>
</gene>
<dbReference type="EMBL" id="AY850346">
    <property type="protein sequence ID" value="AAW69352.1"/>
    <property type="molecule type" value="mRNA"/>
</dbReference>
<dbReference type="EMBL" id="JH792942">
    <property type="protein sequence ID" value="ELQ36533.1"/>
    <property type="molecule type" value="Genomic_DNA"/>
</dbReference>
<dbReference type="SMR" id="L7HZV6"/>
<dbReference type="OrthoDB" id="669672at147550"/>
<dbReference type="Proteomes" id="UP000011086">
    <property type="component" value="Unassembled WGS sequence"/>
</dbReference>
<dbReference type="GO" id="GO:0000786">
    <property type="term" value="C:nucleosome"/>
    <property type="evidence" value="ECO:0007669"/>
    <property type="project" value="UniProtKB-KW"/>
</dbReference>
<dbReference type="GO" id="GO:0005634">
    <property type="term" value="C:nucleus"/>
    <property type="evidence" value="ECO:0007669"/>
    <property type="project" value="UniProtKB-SubCell"/>
</dbReference>
<dbReference type="GO" id="GO:0003677">
    <property type="term" value="F:DNA binding"/>
    <property type="evidence" value="ECO:0007669"/>
    <property type="project" value="UniProtKB-KW"/>
</dbReference>
<dbReference type="GO" id="GO:0046982">
    <property type="term" value="F:protein heterodimerization activity"/>
    <property type="evidence" value="ECO:0007669"/>
    <property type="project" value="InterPro"/>
</dbReference>
<dbReference type="GO" id="GO:0030527">
    <property type="term" value="F:structural constituent of chromatin"/>
    <property type="evidence" value="ECO:0007669"/>
    <property type="project" value="InterPro"/>
</dbReference>
<dbReference type="GO" id="GO:0006281">
    <property type="term" value="P:DNA repair"/>
    <property type="evidence" value="ECO:0007669"/>
    <property type="project" value="UniProtKB-KW"/>
</dbReference>
<dbReference type="CDD" id="cd00074">
    <property type="entry name" value="HFD_H2A"/>
    <property type="match status" value="1"/>
</dbReference>
<dbReference type="FunFam" id="1.10.20.10:FF:000008">
    <property type="entry name" value="Histone H2A"/>
    <property type="match status" value="1"/>
</dbReference>
<dbReference type="Gene3D" id="1.10.20.10">
    <property type="entry name" value="Histone, subunit A"/>
    <property type="match status" value="1"/>
</dbReference>
<dbReference type="InterPro" id="IPR009072">
    <property type="entry name" value="Histone-fold"/>
</dbReference>
<dbReference type="InterPro" id="IPR002119">
    <property type="entry name" value="Histone_H2A"/>
</dbReference>
<dbReference type="InterPro" id="IPR007125">
    <property type="entry name" value="Histone_H2A/H2B/H3"/>
</dbReference>
<dbReference type="InterPro" id="IPR032454">
    <property type="entry name" value="Histone_H2A_C"/>
</dbReference>
<dbReference type="InterPro" id="IPR032458">
    <property type="entry name" value="Histone_H2A_CS"/>
</dbReference>
<dbReference type="PANTHER" id="PTHR23430">
    <property type="entry name" value="HISTONE H2A"/>
    <property type="match status" value="1"/>
</dbReference>
<dbReference type="Pfam" id="PF00125">
    <property type="entry name" value="Histone"/>
    <property type="match status" value="1"/>
</dbReference>
<dbReference type="Pfam" id="PF16211">
    <property type="entry name" value="Histone_H2A_C"/>
    <property type="match status" value="1"/>
</dbReference>
<dbReference type="PRINTS" id="PR00620">
    <property type="entry name" value="HISTONEH2A"/>
</dbReference>
<dbReference type="SMART" id="SM00414">
    <property type="entry name" value="H2A"/>
    <property type="match status" value="1"/>
</dbReference>
<dbReference type="SUPFAM" id="SSF47113">
    <property type="entry name" value="Histone-fold"/>
    <property type="match status" value="1"/>
</dbReference>
<dbReference type="PROSITE" id="PS00046">
    <property type="entry name" value="HISTONE_H2A"/>
    <property type="match status" value="1"/>
</dbReference>
<sequence length="136" mass="14300">MTGGGKSGGKASGSKNAQSRSSKAGLAFPVGRVHRLLRKGNYAQRVGAGAPVYLAAVLEYLAAEILELAGNAARDNKKTRIIPRHLQLAIRNDEELNKLLGHVTIAQGGVLPNIHQNLLPKKTGKTAGGKNASQEM</sequence>
<comment type="function">
    <text>Core component of nucleosome which plays a central role in DNA double strand break (DSB) repair. Nucleosomes wrap and compact DNA into chromatin, limiting DNA accessibility to the cellular machineries which require DNA as a template. Histones thereby play a central role in transcription regulation, DNA repair, DNA replication and chromosomal stability. DNA accessibility is regulated via a complex set of post-translational modifications of histones, also called histone code, and nucleosome remodeling.</text>
</comment>
<comment type="subunit">
    <text>The nucleosome is a histone octamer containing two molecules each of H2A, H2B, H3 and H4 assembled in one H3-H4 heterotetramer and two H2A-H2B heterodimers. The octamer wraps approximately 147 bp of DNA.</text>
</comment>
<comment type="subcellular location">
    <subcellularLocation>
        <location evidence="1">Nucleus</location>
    </subcellularLocation>
    <subcellularLocation>
        <location evidence="1">Chromosome</location>
    </subcellularLocation>
</comment>
<comment type="domain">
    <text>The [ST]-Q motif constitutes a recognition sequence for kinases from the PI3/PI4-kinase family.</text>
</comment>
<comment type="PTM">
    <text evidence="1">Phosphorylated to form H2AS128ph (gamma-H2A) in response to DNA double-strand breaks (DSBs) generated by exogenous genotoxic agents and by stalled replication forks. Phosphorylation is dependent on the DNA damage checkpoint kinases MEC1/ATR and TEL1/ATM, spreads on either side of a detected DSB site and may mark the surrounding chromatin for recruitment of proteins required for DNA damage signaling and repair. Gamma-H2A is removed from the DNA prior to the strand invasion-primer extension step of the repair process and subsequently dephosphorylated. Dephosphorylation is necessary for efficient recovery from the DNA damage checkpoint (By similarity).</text>
</comment>
<comment type="PTM">
    <text evidence="1">Acetylated by ESA1 to form H2AK4ac and H2AK7ac.</text>
</comment>
<comment type="miscellaneous">
    <text evidence="3">In contrast to vertebrates and insects, its C-terminus is not monoubiquitinated.</text>
</comment>
<comment type="similarity">
    <text evidence="3">Belongs to the histone H2A family.</text>
</comment>
<comment type="caution">
    <text evidence="3">To ensure consistency between histone entries, we follow the 'Brno' nomenclature for histone modifications, with positions referring to those used in the literature for the 'closest' model organism. Due to slight variations in histone sequences between organisms and to the presence of initiator methionine in UniProtKB/Swiss-Prot sequences, the actual positions of modified amino acids in the sequence generally differ. In this entry the following conventions are used: H2AK4ac = acetylated Lys-6; H2AK7ac = acetylated Lys-10; H2AS128ph = phosphorylated Ser-133.</text>
</comment>
<accession>L7HZV6</accession>
<accession>A4QRI0</accession>
<accession>G4N7F5</accession>
<accession>Q5G578</accession>